<proteinExistence type="inferred from homology"/>
<reference key="1">
    <citation type="journal article" date="2004" name="Proc. Natl. Acad. Sci. U.S.A.">
        <title>Genomic plasticity of the causative agent of melioidosis, Burkholderia pseudomallei.</title>
        <authorList>
            <person name="Holden M.T.G."/>
            <person name="Titball R.W."/>
            <person name="Peacock S.J."/>
            <person name="Cerdeno-Tarraga A.-M."/>
            <person name="Atkins T."/>
            <person name="Crossman L.C."/>
            <person name="Pitt T."/>
            <person name="Churcher C."/>
            <person name="Mungall K.L."/>
            <person name="Bentley S.D."/>
            <person name="Sebaihia M."/>
            <person name="Thomson N.R."/>
            <person name="Bason N."/>
            <person name="Beacham I.R."/>
            <person name="Brooks K."/>
            <person name="Brown K.A."/>
            <person name="Brown N.F."/>
            <person name="Challis G.L."/>
            <person name="Cherevach I."/>
            <person name="Chillingworth T."/>
            <person name="Cronin A."/>
            <person name="Crossett B."/>
            <person name="Davis P."/>
            <person name="DeShazer D."/>
            <person name="Feltwell T."/>
            <person name="Fraser A."/>
            <person name="Hance Z."/>
            <person name="Hauser H."/>
            <person name="Holroyd S."/>
            <person name="Jagels K."/>
            <person name="Keith K.E."/>
            <person name="Maddison M."/>
            <person name="Moule S."/>
            <person name="Price C."/>
            <person name="Quail M.A."/>
            <person name="Rabbinowitsch E."/>
            <person name="Rutherford K."/>
            <person name="Sanders M."/>
            <person name="Simmonds M."/>
            <person name="Songsivilai S."/>
            <person name="Stevens K."/>
            <person name="Tumapa S."/>
            <person name="Vesaratchavest M."/>
            <person name="Whitehead S."/>
            <person name="Yeats C."/>
            <person name="Barrell B.G."/>
            <person name="Oyston P.C.F."/>
            <person name="Parkhill J."/>
        </authorList>
    </citation>
    <scope>NUCLEOTIDE SEQUENCE [LARGE SCALE GENOMIC DNA]</scope>
    <source>
        <strain>K96243</strain>
    </source>
</reference>
<evidence type="ECO:0000255" key="1">
    <source>
        <dbReference type="HAMAP-Rule" id="MF_00101"/>
    </source>
</evidence>
<organism>
    <name type="scientific">Burkholderia pseudomallei (strain K96243)</name>
    <dbReference type="NCBI Taxonomy" id="272560"/>
    <lineage>
        <taxon>Bacteria</taxon>
        <taxon>Pseudomonadati</taxon>
        <taxon>Pseudomonadota</taxon>
        <taxon>Betaproteobacteria</taxon>
        <taxon>Burkholderiales</taxon>
        <taxon>Burkholderiaceae</taxon>
        <taxon>Burkholderia</taxon>
        <taxon>pseudomallei group</taxon>
    </lineage>
</organism>
<sequence>MAIYGIGTDLAQVSRIAAVLERTGGRFAEKVLGPDELRVFHARRARSEARGIAFLATRFSAKEAFSKAIGLGMHWPMTWRALQTLNRPSGEPYVVASGELAAWLDARGITARVTVSDERDYAVTFVVAEAPDDVAAARSGAAS</sequence>
<comment type="function">
    <text evidence="1">Transfers the 4'-phosphopantetheine moiety from coenzyme A to a Ser of acyl-carrier-protein.</text>
</comment>
<comment type="catalytic activity">
    <reaction evidence="1">
        <text>apo-[ACP] + CoA = holo-[ACP] + adenosine 3',5'-bisphosphate + H(+)</text>
        <dbReference type="Rhea" id="RHEA:12068"/>
        <dbReference type="Rhea" id="RHEA-COMP:9685"/>
        <dbReference type="Rhea" id="RHEA-COMP:9690"/>
        <dbReference type="ChEBI" id="CHEBI:15378"/>
        <dbReference type="ChEBI" id="CHEBI:29999"/>
        <dbReference type="ChEBI" id="CHEBI:57287"/>
        <dbReference type="ChEBI" id="CHEBI:58343"/>
        <dbReference type="ChEBI" id="CHEBI:64479"/>
        <dbReference type="EC" id="2.7.8.7"/>
    </reaction>
</comment>
<comment type="cofactor">
    <cofactor evidence="1">
        <name>Mg(2+)</name>
        <dbReference type="ChEBI" id="CHEBI:18420"/>
    </cofactor>
</comment>
<comment type="subcellular location">
    <subcellularLocation>
        <location evidence="1">Cytoplasm</location>
    </subcellularLocation>
</comment>
<comment type="similarity">
    <text evidence="1">Belongs to the P-Pant transferase superfamily. AcpS family.</text>
</comment>
<feature type="chain" id="PRO_0000175625" description="Holo-[acyl-carrier-protein] synthase">
    <location>
        <begin position="1"/>
        <end position="143"/>
    </location>
</feature>
<feature type="binding site" evidence="1">
    <location>
        <position position="9"/>
    </location>
    <ligand>
        <name>Mg(2+)</name>
        <dbReference type="ChEBI" id="CHEBI:18420"/>
    </ligand>
</feature>
<feature type="binding site" evidence="1">
    <location>
        <position position="63"/>
    </location>
    <ligand>
        <name>Mg(2+)</name>
        <dbReference type="ChEBI" id="CHEBI:18420"/>
    </ligand>
</feature>
<dbReference type="EC" id="2.7.8.7" evidence="1"/>
<dbReference type="EMBL" id="BX571965">
    <property type="protein sequence ID" value="CAH36428.1"/>
    <property type="molecule type" value="Genomic_DNA"/>
</dbReference>
<dbReference type="RefSeq" id="WP_004191194.1">
    <property type="nucleotide sequence ID" value="NZ_CP009538.1"/>
</dbReference>
<dbReference type="RefSeq" id="YP_109017.1">
    <property type="nucleotide sequence ID" value="NC_006350.1"/>
</dbReference>
<dbReference type="SMR" id="Q63S99"/>
<dbReference type="STRING" id="272560.BPSL2425"/>
<dbReference type="GeneID" id="93061005"/>
<dbReference type="KEGG" id="bps:BPSL2425"/>
<dbReference type="PATRIC" id="fig|272560.51.peg.2965"/>
<dbReference type="eggNOG" id="COG0736">
    <property type="taxonomic scope" value="Bacteria"/>
</dbReference>
<dbReference type="Proteomes" id="UP000000605">
    <property type="component" value="Chromosome 1"/>
</dbReference>
<dbReference type="GO" id="GO:0005737">
    <property type="term" value="C:cytoplasm"/>
    <property type="evidence" value="ECO:0007669"/>
    <property type="project" value="UniProtKB-SubCell"/>
</dbReference>
<dbReference type="GO" id="GO:0008897">
    <property type="term" value="F:holo-[acyl-carrier-protein] synthase activity"/>
    <property type="evidence" value="ECO:0007669"/>
    <property type="project" value="UniProtKB-UniRule"/>
</dbReference>
<dbReference type="GO" id="GO:0000287">
    <property type="term" value="F:magnesium ion binding"/>
    <property type="evidence" value="ECO:0007669"/>
    <property type="project" value="UniProtKB-UniRule"/>
</dbReference>
<dbReference type="GO" id="GO:0006633">
    <property type="term" value="P:fatty acid biosynthetic process"/>
    <property type="evidence" value="ECO:0007669"/>
    <property type="project" value="UniProtKB-UniRule"/>
</dbReference>
<dbReference type="Gene3D" id="3.90.470.20">
    <property type="entry name" value="4'-phosphopantetheinyl transferase domain"/>
    <property type="match status" value="1"/>
</dbReference>
<dbReference type="HAMAP" id="MF_00101">
    <property type="entry name" value="AcpS"/>
    <property type="match status" value="1"/>
</dbReference>
<dbReference type="InterPro" id="IPR008278">
    <property type="entry name" value="4-PPantetheinyl_Trfase_dom"/>
</dbReference>
<dbReference type="InterPro" id="IPR037143">
    <property type="entry name" value="4-PPantetheinyl_Trfase_dom_sf"/>
</dbReference>
<dbReference type="InterPro" id="IPR002582">
    <property type="entry name" value="ACPS"/>
</dbReference>
<dbReference type="InterPro" id="IPR004568">
    <property type="entry name" value="Ppantetheine-prot_Trfase_dom"/>
</dbReference>
<dbReference type="NCBIfam" id="TIGR00516">
    <property type="entry name" value="acpS"/>
    <property type="match status" value="1"/>
</dbReference>
<dbReference type="NCBIfam" id="TIGR00556">
    <property type="entry name" value="pantethn_trn"/>
    <property type="match status" value="1"/>
</dbReference>
<dbReference type="Pfam" id="PF01648">
    <property type="entry name" value="ACPS"/>
    <property type="match status" value="1"/>
</dbReference>
<dbReference type="SUPFAM" id="SSF56214">
    <property type="entry name" value="4'-phosphopantetheinyl transferase"/>
    <property type="match status" value="1"/>
</dbReference>
<name>ACPS_BURPS</name>
<keyword id="KW-0963">Cytoplasm</keyword>
<keyword id="KW-0275">Fatty acid biosynthesis</keyword>
<keyword id="KW-0276">Fatty acid metabolism</keyword>
<keyword id="KW-0444">Lipid biosynthesis</keyword>
<keyword id="KW-0443">Lipid metabolism</keyword>
<keyword id="KW-0460">Magnesium</keyword>
<keyword id="KW-0479">Metal-binding</keyword>
<keyword id="KW-1185">Reference proteome</keyword>
<keyword id="KW-0808">Transferase</keyword>
<accession>Q63S99</accession>
<gene>
    <name evidence="1" type="primary">acpS</name>
    <name type="ordered locus">BPSL2425</name>
</gene>
<protein>
    <recommendedName>
        <fullName evidence="1">Holo-[acyl-carrier-protein] synthase</fullName>
        <shortName evidence="1">Holo-ACP synthase</shortName>
        <ecNumber evidence="1">2.7.8.7</ecNumber>
    </recommendedName>
    <alternativeName>
        <fullName evidence="1">4'-phosphopantetheinyl transferase AcpS</fullName>
    </alternativeName>
</protein>